<dbReference type="EC" id="6.3.5.-" evidence="1"/>
<dbReference type="EMBL" id="BX640412">
    <property type="protein sequence ID" value="CAE44705.1"/>
    <property type="molecule type" value="Genomic_DNA"/>
</dbReference>
<dbReference type="RefSeq" id="NP_879245.1">
    <property type="nucleotide sequence ID" value="NC_002929.2"/>
</dbReference>
<dbReference type="RefSeq" id="WP_010929772.1">
    <property type="nucleotide sequence ID" value="NZ_CP039022.1"/>
</dbReference>
<dbReference type="SMR" id="Q7VSN1"/>
<dbReference type="STRING" id="257313.BP0373"/>
<dbReference type="PaxDb" id="257313-BP0373"/>
<dbReference type="GeneID" id="69603374"/>
<dbReference type="KEGG" id="bpe:BP0373"/>
<dbReference type="PATRIC" id="fig|257313.5.peg.403"/>
<dbReference type="eggNOG" id="COG0721">
    <property type="taxonomic scope" value="Bacteria"/>
</dbReference>
<dbReference type="HOGENOM" id="CLU_105899_2_2_4"/>
<dbReference type="Proteomes" id="UP000002676">
    <property type="component" value="Chromosome"/>
</dbReference>
<dbReference type="GO" id="GO:0050566">
    <property type="term" value="F:asparaginyl-tRNA synthase (glutamine-hydrolyzing) activity"/>
    <property type="evidence" value="ECO:0007669"/>
    <property type="project" value="RHEA"/>
</dbReference>
<dbReference type="GO" id="GO:0005524">
    <property type="term" value="F:ATP binding"/>
    <property type="evidence" value="ECO:0007669"/>
    <property type="project" value="UniProtKB-KW"/>
</dbReference>
<dbReference type="GO" id="GO:0050567">
    <property type="term" value="F:glutaminyl-tRNA synthase (glutamine-hydrolyzing) activity"/>
    <property type="evidence" value="ECO:0007669"/>
    <property type="project" value="UniProtKB-UniRule"/>
</dbReference>
<dbReference type="GO" id="GO:0070681">
    <property type="term" value="P:glutaminyl-tRNAGln biosynthesis via transamidation"/>
    <property type="evidence" value="ECO:0007669"/>
    <property type="project" value="TreeGrafter"/>
</dbReference>
<dbReference type="GO" id="GO:0006450">
    <property type="term" value="P:regulation of translational fidelity"/>
    <property type="evidence" value="ECO:0007669"/>
    <property type="project" value="InterPro"/>
</dbReference>
<dbReference type="GO" id="GO:0006412">
    <property type="term" value="P:translation"/>
    <property type="evidence" value="ECO:0007669"/>
    <property type="project" value="UniProtKB-UniRule"/>
</dbReference>
<dbReference type="Gene3D" id="1.10.20.60">
    <property type="entry name" value="Glu-tRNAGln amidotransferase C subunit, N-terminal domain"/>
    <property type="match status" value="1"/>
</dbReference>
<dbReference type="HAMAP" id="MF_00122">
    <property type="entry name" value="GatC"/>
    <property type="match status" value="1"/>
</dbReference>
<dbReference type="InterPro" id="IPR036113">
    <property type="entry name" value="Asp/Glu-ADT_sf_sub_c"/>
</dbReference>
<dbReference type="InterPro" id="IPR003837">
    <property type="entry name" value="GatC"/>
</dbReference>
<dbReference type="NCBIfam" id="TIGR00135">
    <property type="entry name" value="gatC"/>
    <property type="match status" value="1"/>
</dbReference>
<dbReference type="PANTHER" id="PTHR15004">
    <property type="entry name" value="GLUTAMYL-TRNA(GLN) AMIDOTRANSFERASE SUBUNIT C, MITOCHONDRIAL"/>
    <property type="match status" value="1"/>
</dbReference>
<dbReference type="PANTHER" id="PTHR15004:SF0">
    <property type="entry name" value="GLUTAMYL-TRNA(GLN) AMIDOTRANSFERASE SUBUNIT C, MITOCHONDRIAL"/>
    <property type="match status" value="1"/>
</dbReference>
<dbReference type="Pfam" id="PF02686">
    <property type="entry name" value="GatC"/>
    <property type="match status" value="1"/>
</dbReference>
<dbReference type="SUPFAM" id="SSF141000">
    <property type="entry name" value="Glu-tRNAGln amidotransferase C subunit"/>
    <property type="match status" value="1"/>
</dbReference>
<comment type="function">
    <text evidence="1">Allows the formation of correctly charged Asn-tRNA(Asn) or Gln-tRNA(Gln) through the transamidation of misacylated Asp-tRNA(Asn) or Glu-tRNA(Gln) in organisms which lack either or both of asparaginyl-tRNA or glutaminyl-tRNA synthetases. The reaction takes place in the presence of glutamine and ATP through an activated phospho-Asp-tRNA(Asn) or phospho-Glu-tRNA(Gln).</text>
</comment>
<comment type="catalytic activity">
    <reaction evidence="1">
        <text>L-glutamyl-tRNA(Gln) + L-glutamine + ATP + H2O = L-glutaminyl-tRNA(Gln) + L-glutamate + ADP + phosphate + H(+)</text>
        <dbReference type="Rhea" id="RHEA:17521"/>
        <dbReference type="Rhea" id="RHEA-COMP:9681"/>
        <dbReference type="Rhea" id="RHEA-COMP:9684"/>
        <dbReference type="ChEBI" id="CHEBI:15377"/>
        <dbReference type="ChEBI" id="CHEBI:15378"/>
        <dbReference type="ChEBI" id="CHEBI:29985"/>
        <dbReference type="ChEBI" id="CHEBI:30616"/>
        <dbReference type="ChEBI" id="CHEBI:43474"/>
        <dbReference type="ChEBI" id="CHEBI:58359"/>
        <dbReference type="ChEBI" id="CHEBI:78520"/>
        <dbReference type="ChEBI" id="CHEBI:78521"/>
        <dbReference type="ChEBI" id="CHEBI:456216"/>
    </reaction>
</comment>
<comment type="catalytic activity">
    <reaction evidence="1">
        <text>L-aspartyl-tRNA(Asn) + L-glutamine + ATP + H2O = L-asparaginyl-tRNA(Asn) + L-glutamate + ADP + phosphate + 2 H(+)</text>
        <dbReference type="Rhea" id="RHEA:14513"/>
        <dbReference type="Rhea" id="RHEA-COMP:9674"/>
        <dbReference type="Rhea" id="RHEA-COMP:9677"/>
        <dbReference type="ChEBI" id="CHEBI:15377"/>
        <dbReference type="ChEBI" id="CHEBI:15378"/>
        <dbReference type="ChEBI" id="CHEBI:29985"/>
        <dbReference type="ChEBI" id="CHEBI:30616"/>
        <dbReference type="ChEBI" id="CHEBI:43474"/>
        <dbReference type="ChEBI" id="CHEBI:58359"/>
        <dbReference type="ChEBI" id="CHEBI:78515"/>
        <dbReference type="ChEBI" id="CHEBI:78516"/>
        <dbReference type="ChEBI" id="CHEBI:456216"/>
    </reaction>
</comment>
<comment type="subunit">
    <text evidence="1">Heterotrimer of A, B and C subunits.</text>
</comment>
<comment type="similarity">
    <text evidence="1">Belongs to the GatC family.</text>
</comment>
<gene>
    <name evidence="1" type="primary">gatC</name>
    <name type="ordered locus">BP0373</name>
</gene>
<sequence>MALNEQDVARIARLARIELTPDQRGRAQAELNGILHLIERLQAVDTQGVEPLAHPLSAHEDITLRLREDAVSEQATEARRAELLANAPESADGLFLVPKVIE</sequence>
<keyword id="KW-0067">ATP-binding</keyword>
<keyword id="KW-0436">Ligase</keyword>
<keyword id="KW-0547">Nucleotide-binding</keyword>
<keyword id="KW-0648">Protein biosynthesis</keyword>
<keyword id="KW-1185">Reference proteome</keyword>
<organism>
    <name type="scientific">Bordetella pertussis (strain Tohama I / ATCC BAA-589 / NCTC 13251)</name>
    <dbReference type="NCBI Taxonomy" id="257313"/>
    <lineage>
        <taxon>Bacteria</taxon>
        <taxon>Pseudomonadati</taxon>
        <taxon>Pseudomonadota</taxon>
        <taxon>Betaproteobacteria</taxon>
        <taxon>Burkholderiales</taxon>
        <taxon>Alcaligenaceae</taxon>
        <taxon>Bordetella</taxon>
    </lineage>
</organism>
<name>GATC_BORPE</name>
<reference key="1">
    <citation type="journal article" date="2003" name="Nat. Genet.">
        <title>Comparative analysis of the genome sequences of Bordetella pertussis, Bordetella parapertussis and Bordetella bronchiseptica.</title>
        <authorList>
            <person name="Parkhill J."/>
            <person name="Sebaihia M."/>
            <person name="Preston A."/>
            <person name="Murphy L.D."/>
            <person name="Thomson N.R."/>
            <person name="Harris D.E."/>
            <person name="Holden M.T.G."/>
            <person name="Churcher C.M."/>
            <person name="Bentley S.D."/>
            <person name="Mungall K.L."/>
            <person name="Cerdeno-Tarraga A.-M."/>
            <person name="Temple L."/>
            <person name="James K.D."/>
            <person name="Harris B."/>
            <person name="Quail M.A."/>
            <person name="Achtman M."/>
            <person name="Atkin R."/>
            <person name="Baker S."/>
            <person name="Basham D."/>
            <person name="Bason N."/>
            <person name="Cherevach I."/>
            <person name="Chillingworth T."/>
            <person name="Collins M."/>
            <person name="Cronin A."/>
            <person name="Davis P."/>
            <person name="Doggett J."/>
            <person name="Feltwell T."/>
            <person name="Goble A."/>
            <person name="Hamlin N."/>
            <person name="Hauser H."/>
            <person name="Holroyd S."/>
            <person name="Jagels K."/>
            <person name="Leather S."/>
            <person name="Moule S."/>
            <person name="Norberczak H."/>
            <person name="O'Neil S."/>
            <person name="Ormond D."/>
            <person name="Price C."/>
            <person name="Rabbinowitsch E."/>
            <person name="Rutter S."/>
            <person name="Sanders M."/>
            <person name="Saunders D."/>
            <person name="Seeger K."/>
            <person name="Sharp S."/>
            <person name="Simmonds M."/>
            <person name="Skelton J."/>
            <person name="Squares R."/>
            <person name="Squares S."/>
            <person name="Stevens K."/>
            <person name="Unwin L."/>
            <person name="Whitehead S."/>
            <person name="Barrell B.G."/>
            <person name="Maskell D.J."/>
        </authorList>
    </citation>
    <scope>NUCLEOTIDE SEQUENCE [LARGE SCALE GENOMIC DNA]</scope>
    <source>
        <strain>Tohama I / ATCC BAA-589 / NCTC 13251</strain>
    </source>
</reference>
<protein>
    <recommendedName>
        <fullName evidence="1">Aspartyl/glutamyl-tRNA(Asn/Gln) amidotransferase subunit C</fullName>
        <shortName evidence="1">Asp/Glu-ADT subunit C</shortName>
        <ecNumber evidence="1">6.3.5.-</ecNumber>
    </recommendedName>
</protein>
<accession>Q7VSN1</accession>
<proteinExistence type="inferred from homology"/>
<feature type="chain" id="PRO_0000105281" description="Aspartyl/glutamyl-tRNA(Asn/Gln) amidotransferase subunit C">
    <location>
        <begin position="1"/>
        <end position="102"/>
    </location>
</feature>
<evidence type="ECO:0000255" key="1">
    <source>
        <dbReference type="HAMAP-Rule" id="MF_00122"/>
    </source>
</evidence>